<keyword id="KW-0067">ATP-binding</keyword>
<keyword id="KW-0963">Cytoplasm</keyword>
<keyword id="KW-0460">Magnesium</keyword>
<keyword id="KW-0479">Metal-binding</keyword>
<keyword id="KW-0547">Nucleotide-binding</keyword>
<keyword id="KW-0554">One-carbon metabolism</keyword>
<keyword id="KW-0630">Potassium</keyword>
<keyword id="KW-0808">Transferase</keyword>
<dbReference type="EC" id="2.5.1.6" evidence="1"/>
<dbReference type="EMBL" id="CP001091">
    <property type="protein sequence ID" value="ACE61790.1"/>
    <property type="molecule type" value="Genomic_DNA"/>
</dbReference>
<dbReference type="RefSeq" id="WP_005617573.1">
    <property type="nucleotide sequence ID" value="NC_010939.1"/>
</dbReference>
<dbReference type="SMR" id="B3H1W3"/>
<dbReference type="KEGG" id="apa:APP7_1138"/>
<dbReference type="HOGENOM" id="CLU_041802_1_1_6"/>
<dbReference type="UniPathway" id="UPA00315">
    <property type="reaction ID" value="UER00080"/>
</dbReference>
<dbReference type="Proteomes" id="UP000001226">
    <property type="component" value="Chromosome"/>
</dbReference>
<dbReference type="GO" id="GO:0005737">
    <property type="term" value="C:cytoplasm"/>
    <property type="evidence" value="ECO:0007669"/>
    <property type="project" value="UniProtKB-SubCell"/>
</dbReference>
<dbReference type="GO" id="GO:0005524">
    <property type="term" value="F:ATP binding"/>
    <property type="evidence" value="ECO:0007669"/>
    <property type="project" value="UniProtKB-UniRule"/>
</dbReference>
<dbReference type="GO" id="GO:0000287">
    <property type="term" value="F:magnesium ion binding"/>
    <property type="evidence" value="ECO:0007669"/>
    <property type="project" value="UniProtKB-UniRule"/>
</dbReference>
<dbReference type="GO" id="GO:0004478">
    <property type="term" value="F:methionine adenosyltransferase activity"/>
    <property type="evidence" value="ECO:0007669"/>
    <property type="project" value="UniProtKB-UniRule"/>
</dbReference>
<dbReference type="GO" id="GO:0006730">
    <property type="term" value="P:one-carbon metabolic process"/>
    <property type="evidence" value="ECO:0007669"/>
    <property type="project" value="UniProtKB-KW"/>
</dbReference>
<dbReference type="GO" id="GO:0006556">
    <property type="term" value="P:S-adenosylmethionine biosynthetic process"/>
    <property type="evidence" value="ECO:0007669"/>
    <property type="project" value="UniProtKB-UniRule"/>
</dbReference>
<dbReference type="CDD" id="cd18079">
    <property type="entry name" value="S-AdoMet_synt"/>
    <property type="match status" value="1"/>
</dbReference>
<dbReference type="FunFam" id="3.30.300.10:FF:000003">
    <property type="entry name" value="S-adenosylmethionine synthase"/>
    <property type="match status" value="1"/>
</dbReference>
<dbReference type="FunFam" id="3.30.300.10:FF:000004">
    <property type="entry name" value="S-adenosylmethionine synthase"/>
    <property type="match status" value="1"/>
</dbReference>
<dbReference type="Gene3D" id="3.30.300.10">
    <property type="match status" value="3"/>
</dbReference>
<dbReference type="HAMAP" id="MF_00086">
    <property type="entry name" value="S_AdoMet_synth1"/>
    <property type="match status" value="1"/>
</dbReference>
<dbReference type="InterPro" id="IPR022631">
    <property type="entry name" value="ADOMET_SYNTHASE_CS"/>
</dbReference>
<dbReference type="InterPro" id="IPR022630">
    <property type="entry name" value="S-AdoMet_synt_C"/>
</dbReference>
<dbReference type="InterPro" id="IPR022629">
    <property type="entry name" value="S-AdoMet_synt_central"/>
</dbReference>
<dbReference type="InterPro" id="IPR022628">
    <property type="entry name" value="S-AdoMet_synt_N"/>
</dbReference>
<dbReference type="InterPro" id="IPR002133">
    <property type="entry name" value="S-AdoMet_synthetase"/>
</dbReference>
<dbReference type="InterPro" id="IPR022636">
    <property type="entry name" value="S-AdoMet_synthetase_sfam"/>
</dbReference>
<dbReference type="NCBIfam" id="TIGR01034">
    <property type="entry name" value="metK"/>
    <property type="match status" value="1"/>
</dbReference>
<dbReference type="PANTHER" id="PTHR11964">
    <property type="entry name" value="S-ADENOSYLMETHIONINE SYNTHETASE"/>
    <property type="match status" value="1"/>
</dbReference>
<dbReference type="Pfam" id="PF02773">
    <property type="entry name" value="S-AdoMet_synt_C"/>
    <property type="match status" value="1"/>
</dbReference>
<dbReference type="Pfam" id="PF02772">
    <property type="entry name" value="S-AdoMet_synt_M"/>
    <property type="match status" value="1"/>
</dbReference>
<dbReference type="Pfam" id="PF00438">
    <property type="entry name" value="S-AdoMet_synt_N"/>
    <property type="match status" value="1"/>
</dbReference>
<dbReference type="PIRSF" id="PIRSF000497">
    <property type="entry name" value="MAT"/>
    <property type="match status" value="1"/>
</dbReference>
<dbReference type="SUPFAM" id="SSF55973">
    <property type="entry name" value="S-adenosylmethionine synthetase"/>
    <property type="match status" value="3"/>
</dbReference>
<dbReference type="PROSITE" id="PS00376">
    <property type="entry name" value="ADOMET_SYNTHASE_1"/>
    <property type="match status" value="1"/>
</dbReference>
<dbReference type="PROSITE" id="PS00377">
    <property type="entry name" value="ADOMET_SYNTHASE_2"/>
    <property type="match status" value="1"/>
</dbReference>
<organism>
    <name type="scientific">Actinobacillus pleuropneumoniae serotype 7 (strain AP76)</name>
    <dbReference type="NCBI Taxonomy" id="537457"/>
    <lineage>
        <taxon>Bacteria</taxon>
        <taxon>Pseudomonadati</taxon>
        <taxon>Pseudomonadota</taxon>
        <taxon>Gammaproteobacteria</taxon>
        <taxon>Pasteurellales</taxon>
        <taxon>Pasteurellaceae</taxon>
        <taxon>Actinobacillus</taxon>
    </lineage>
</organism>
<protein>
    <recommendedName>
        <fullName evidence="1">S-adenosylmethionine synthase</fullName>
        <shortName evidence="1">AdoMet synthase</shortName>
        <ecNumber evidence="1">2.5.1.6</ecNumber>
    </recommendedName>
    <alternativeName>
        <fullName evidence="1">MAT</fullName>
    </alternativeName>
    <alternativeName>
        <fullName evidence="1">Methionine adenosyltransferase</fullName>
    </alternativeName>
</protein>
<proteinExistence type="inferred from homology"/>
<reference key="1">
    <citation type="submission" date="2008-06" db="EMBL/GenBank/DDBJ databases">
        <title>Genome and proteome analysis of A. pleuropneumoniae serotype 7.</title>
        <authorList>
            <person name="Linke B."/>
            <person name="Buettner F."/>
            <person name="Martinez-Arias R."/>
            <person name="Goesmann A."/>
            <person name="Baltes N."/>
            <person name="Tegetmeyer H."/>
            <person name="Singh M."/>
            <person name="Gerlach G.F."/>
        </authorList>
    </citation>
    <scope>NUCLEOTIDE SEQUENCE [LARGE SCALE GENOMIC DNA]</scope>
    <source>
        <strain>AP76</strain>
    </source>
</reference>
<feature type="chain" id="PRO_1000093018" description="S-adenosylmethionine synthase">
    <location>
        <begin position="1"/>
        <end position="383"/>
    </location>
</feature>
<feature type="region of interest" description="Flexible loop" evidence="1">
    <location>
        <begin position="99"/>
        <end position="109"/>
    </location>
</feature>
<feature type="binding site" description="in other chain" evidence="1">
    <location>
        <position position="15"/>
    </location>
    <ligand>
        <name>ATP</name>
        <dbReference type="ChEBI" id="CHEBI:30616"/>
        <note>ligand shared between two neighboring subunits</note>
    </ligand>
</feature>
<feature type="binding site" evidence="1">
    <location>
        <position position="17"/>
    </location>
    <ligand>
        <name>Mg(2+)</name>
        <dbReference type="ChEBI" id="CHEBI:18420"/>
    </ligand>
</feature>
<feature type="binding site" evidence="1">
    <location>
        <position position="43"/>
    </location>
    <ligand>
        <name>K(+)</name>
        <dbReference type="ChEBI" id="CHEBI:29103"/>
    </ligand>
</feature>
<feature type="binding site" description="in other chain" evidence="1">
    <location>
        <position position="56"/>
    </location>
    <ligand>
        <name>L-methionine</name>
        <dbReference type="ChEBI" id="CHEBI:57844"/>
        <note>ligand shared between two neighboring subunits</note>
    </ligand>
</feature>
<feature type="binding site" description="in other chain" evidence="1">
    <location>
        <position position="99"/>
    </location>
    <ligand>
        <name>L-methionine</name>
        <dbReference type="ChEBI" id="CHEBI:57844"/>
        <note>ligand shared between two neighboring subunits</note>
    </ligand>
</feature>
<feature type="binding site" description="in other chain" evidence="1">
    <location>
        <begin position="164"/>
        <end position="166"/>
    </location>
    <ligand>
        <name>ATP</name>
        <dbReference type="ChEBI" id="CHEBI:30616"/>
        <note>ligand shared between two neighboring subunits</note>
    </ligand>
</feature>
<feature type="binding site" description="in other chain" evidence="1">
    <location>
        <begin position="230"/>
        <end position="231"/>
    </location>
    <ligand>
        <name>ATP</name>
        <dbReference type="ChEBI" id="CHEBI:30616"/>
        <note>ligand shared between two neighboring subunits</note>
    </ligand>
</feature>
<feature type="binding site" evidence="1">
    <location>
        <position position="239"/>
    </location>
    <ligand>
        <name>ATP</name>
        <dbReference type="ChEBI" id="CHEBI:30616"/>
        <note>ligand shared between two neighboring subunits</note>
    </ligand>
</feature>
<feature type="binding site" evidence="1">
    <location>
        <position position="239"/>
    </location>
    <ligand>
        <name>L-methionine</name>
        <dbReference type="ChEBI" id="CHEBI:57844"/>
        <note>ligand shared between two neighboring subunits</note>
    </ligand>
</feature>
<feature type="binding site" description="in other chain" evidence="1">
    <location>
        <begin position="245"/>
        <end position="246"/>
    </location>
    <ligand>
        <name>ATP</name>
        <dbReference type="ChEBI" id="CHEBI:30616"/>
        <note>ligand shared between two neighboring subunits</note>
    </ligand>
</feature>
<feature type="binding site" evidence="1">
    <location>
        <position position="262"/>
    </location>
    <ligand>
        <name>ATP</name>
        <dbReference type="ChEBI" id="CHEBI:30616"/>
        <note>ligand shared between two neighboring subunits</note>
    </ligand>
</feature>
<feature type="binding site" evidence="1">
    <location>
        <position position="266"/>
    </location>
    <ligand>
        <name>ATP</name>
        <dbReference type="ChEBI" id="CHEBI:30616"/>
        <note>ligand shared between two neighboring subunits</note>
    </ligand>
</feature>
<feature type="binding site" description="in other chain" evidence="1">
    <location>
        <position position="270"/>
    </location>
    <ligand>
        <name>L-methionine</name>
        <dbReference type="ChEBI" id="CHEBI:57844"/>
        <note>ligand shared between two neighboring subunits</note>
    </ligand>
</feature>
<gene>
    <name evidence="1" type="primary">metK</name>
    <name type="ordered locus">APP7_1138</name>
</gene>
<evidence type="ECO:0000255" key="1">
    <source>
        <dbReference type="HAMAP-Rule" id="MF_00086"/>
    </source>
</evidence>
<sequence length="383" mass="41702">MAINLFTSESVSEGHPDKIADQISDAVLDEILKQDPKARVACETYVKTGMALVGGEITTSAWVDIENLTRQVICDIGYTHSDMGFDAHSCAVLNAIGKQSPDINQGVDRADPLEQGAGDQGIMFGYATNETEVLMPAPITYAHRLMEQQAKVRKSGKLDWLRPDAKSQLTFAYENNKIVGIDAVVLSTQHAEHVSQKDLVEGVMEEIIKPVLPSEWLSQNTKYFINPTGRFVIGGPMGDCGLTGRKIIVDTYGGAARHGGGAFSGKDPSKVDRSAAYAARYVAKNIVAAGLADRCEIQLSYAIGVADPTSIMVETFGTGKVSNETLVKLIYQNFDLRPYGLIKMLDLIRPIYRETAAYGHFGREHFPWEQTDKAEALRAGAGL</sequence>
<comment type="function">
    <text evidence="1">Catalyzes the formation of S-adenosylmethionine (AdoMet) from methionine and ATP. The overall synthetic reaction is composed of two sequential steps, AdoMet formation and the subsequent tripolyphosphate hydrolysis which occurs prior to release of AdoMet from the enzyme.</text>
</comment>
<comment type="catalytic activity">
    <reaction evidence="1">
        <text>L-methionine + ATP + H2O = S-adenosyl-L-methionine + phosphate + diphosphate</text>
        <dbReference type="Rhea" id="RHEA:21080"/>
        <dbReference type="ChEBI" id="CHEBI:15377"/>
        <dbReference type="ChEBI" id="CHEBI:30616"/>
        <dbReference type="ChEBI" id="CHEBI:33019"/>
        <dbReference type="ChEBI" id="CHEBI:43474"/>
        <dbReference type="ChEBI" id="CHEBI:57844"/>
        <dbReference type="ChEBI" id="CHEBI:59789"/>
        <dbReference type="EC" id="2.5.1.6"/>
    </reaction>
</comment>
<comment type="cofactor">
    <cofactor evidence="1">
        <name>Mg(2+)</name>
        <dbReference type="ChEBI" id="CHEBI:18420"/>
    </cofactor>
    <text evidence="1">Binds 2 divalent ions per subunit.</text>
</comment>
<comment type="cofactor">
    <cofactor evidence="1">
        <name>K(+)</name>
        <dbReference type="ChEBI" id="CHEBI:29103"/>
    </cofactor>
    <text evidence="1">Binds 1 potassium ion per subunit.</text>
</comment>
<comment type="pathway">
    <text evidence="1">Amino-acid biosynthesis; S-adenosyl-L-methionine biosynthesis; S-adenosyl-L-methionine from L-methionine: step 1/1.</text>
</comment>
<comment type="subunit">
    <text evidence="1">Homotetramer; dimer of dimers.</text>
</comment>
<comment type="subcellular location">
    <subcellularLocation>
        <location evidence="1">Cytoplasm</location>
    </subcellularLocation>
</comment>
<comment type="similarity">
    <text evidence="1">Belongs to the AdoMet synthase family.</text>
</comment>
<name>METK_ACTP7</name>
<accession>B3H1W3</accession>